<feature type="chain" id="PRO_0000272839" description="Large ribosomal subunit protein uL23">
    <location>
        <begin position="1"/>
        <end position="100"/>
    </location>
</feature>
<sequence length="100" mass="10897">MIREERLLKVILAPHISEKSTVVAEKTNTVVFRVAIDATKAEIKAAVAKLFEVEVDSVRTLVNKGKTKRTGGRVGRRSDWKKAYVTLAAGADIDFVGGAE</sequence>
<evidence type="ECO:0000255" key="1">
    <source>
        <dbReference type="HAMAP-Rule" id="MF_01369"/>
    </source>
</evidence>
<evidence type="ECO:0000305" key="2"/>
<keyword id="KW-1185">Reference proteome</keyword>
<keyword id="KW-0687">Ribonucleoprotein</keyword>
<keyword id="KW-0689">Ribosomal protein</keyword>
<keyword id="KW-0694">RNA-binding</keyword>
<keyword id="KW-0699">rRNA-binding</keyword>
<comment type="function">
    <text evidence="1">One of the early assembly proteins it binds 23S rRNA. One of the proteins that surrounds the polypeptide exit tunnel on the outside of the ribosome. Forms the main docking site for trigger factor binding to the ribosome.</text>
</comment>
<comment type="subunit">
    <text evidence="1">Part of the 50S ribosomal subunit. Contacts protein L29, and trigger factor when it is bound to the ribosome.</text>
</comment>
<comment type="similarity">
    <text evidence="1">Belongs to the universal ribosomal protein uL23 family.</text>
</comment>
<proteinExistence type="inferred from homology"/>
<name>RL23_SHEDO</name>
<gene>
    <name evidence="1" type="primary">rplW</name>
    <name type="ordered locus">Sden_0172</name>
</gene>
<accession>Q12SV7</accession>
<protein>
    <recommendedName>
        <fullName evidence="1">Large ribosomal subunit protein uL23</fullName>
    </recommendedName>
    <alternativeName>
        <fullName evidence="2">50S ribosomal protein L23</fullName>
    </alternativeName>
</protein>
<organism>
    <name type="scientific">Shewanella denitrificans (strain OS217 / ATCC BAA-1090 / DSM 15013)</name>
    <dbReference type="NCBI Taxonomy" id="318161"/>
    <lineage>
        <taxon>Bacteria</taxon>
        <taxon>Pseudomonadati</taxon>
        <taxon>Pseudomonadota</taxon>
        <taxon>Gammaproteobacteria</taxon>
        <taxon>Alteromonadales</taxon>
        <taxon>Shewanellaceae</taxon>
        <taxon>Shewanella</taxon>
    </lineage>
</organism>
<reference key="1">
    <citation type="submission" date="2006-03" db="EMBL/GenBank/DDBJ databases">
        <title>Complete sequence of Shewanella denitrificans OS217.</title>
        <authorList>
            <consortium name="US DOE Joint Genome Institute"/>
            <person name="Copeland A."/>
            <person name="Lucas S."/>
            <person name="Lapidus A."/>
            <person name="Barry K."/>
            <person name="Detter J.C."/>
            <person name="Glavina del Rio T."/>
            <person name="Hammon N."/>
            <person name="Israni S."/>
            <person name="Dalin E."/>
            <person name="Tice H."/>
            <person name="Pitluck S."/>
            <person name="Brettin T."/>
            <person name="Bruce D."/>
            <person name="Han C."/>
            <person name="Tapia R."/>
            <person name="Gilna P."/>
            <person name="Kiss H."/>
            <person name="Schmutz J."/>
            <person name="Larimer F."/>
            <person name="Land M."/>
            <person name="Hauser L."/>
            <person name="Kyrpides N."/>
            <person name="Lykidis A."/>
            <person name="Richardson P."/>
        </authorList>
    </citation>
    <scope>NUCLEOTIDE SEQUENCE [LARGE SCALE GENOMIC DNA]</scope>
    <source>
        <strain>OS217 / ATCC BAA-1090 / DSM 15013</strain>
    </source>
</reference>
<dbReference type="EMBL" id="CP000302">
    <property type="protein sequence ID" value="ABE53469.1"/>
    <property type="molecule type" value="Genomic_DNA"/>
</dbReference>
<dbReference type="RefSeq" id="WP_011494637.1">
    <property type="nucleotide sequence ID" value="NC_007954.1"/>
</dbReference>
<dbReference type="SMR" id="Q12SV7"/>
<dbReference type="STRING" id="318161.Sden_0172"/>
<dbReference type="KEGG" id="sdn:Sden_0172"/>
<dbReference type="eggNOG" id="COG0089">
    <property type="taxonomic scope" value="Bacteria"/>
</dbReference>
<dbReference type="HOGENOM" id="CLU_037562_3_1_6"/>
<dbReference type="OrthoDB" id="9793353at2"/>
<dbReference type="Proteomes" id="UP000001982">
    <property type="component" value="Chromosome"/>
</dbReference>
<dbReference type="GO" id="GO:1990904">
    <property type="term" value="C:ribonucleoprotein complex"/>
    <property type="evidence" value="ECO:0007669"/>
    <property type="project" value="UniProtKB-KW"/>
</dbReference>
<dbReference type="GO" id="GO:0005840">
    <property type="term" value="C:ribosome"/>
    <property type="evidence" value="ECO:0007669"/>
    <property type="project" value="UniProtKB-KW"/>
</dbReference>
<dbReference type="GO" id="GO:0019843">
    <property type="term" value="F:rRNA binding"/>
    <property type="evidence" value="ECO:0007669"/>
    <property type="project" value="UniProtKB-UniRule"/>
</dbReference>
<dbReference type="GO" id="GO:0003735">
    <property type="term" value="F:structural constituent of ribosome"/>
    <property type="evidence" value="ECO:0007669"/>
    <property type="project" value="InterPro"/>
</dbReference>
<dbReference type="GO" id="GO:0006412">
    <property type="term" value="P:translation"/>
    <property type="evidence" value="ECO:0007669"/>
    <property type="project" value="UniProtKB-UniRule"/>
</dbReference>
<dbReference type="FunFam" id="3.30.70.330:FF:000001">
    <property type="entry name" value="50S ribosomal protein L23"/>
    <property type="match status" value="1"/>
</dbReference>
<dbReference type="Gene3D" id="3.30.70.330">
    <property type="match status" value="1"/>
</dbReference>
<dbReference type="HAMAP" id="MF_01369_B">
    <property type="entry name" value="Ribosomal_uL23_B"/>
    <property type="match status" value="1"/>
</dbReference>
<dbReference type="InterPro" id="IPR012677">
    <property type="entry name" value="Nucleotide-bd_a/b_plait_sf"/>
</dbReference>
<dbReference type="InterPro" id="IPR013025">
    <property type="entry name" value="Ribosomal_uL23-like"/>
</dbReference>
<dbReference type="InterPro" id="IPR012678">
    <property type="entry name" value="Ribosomal_uL23/eL15/eS24_sf"/>
</dbReference>
<dbReference type="InterPro" id="IPR001014">
    <property type="entry name" value="Ribosomal_uL23_CS"/>
</dbReference>
<dbReference type="NCBIfam" id="NF004358">
    <property type="entry name" value="PRK05738.1-1"/>
    <property type="match status" value="1"/>
</dbReference>
<dbReference type="NCBIfam" id="NF004359">
    <property type="entry name" value="PRK05738.1-3"/>
    <property type="match status" value="1"/>
</dbReference>
<dbReference type="NCBIfam" id="NF004363">
    <property type="entry name" value="PRK05738.2-4"/>
    <property type="match status" value="1"/>
</dbReference>
<dbReference type="PANTHER" id="PTHR11620">
    <property type="entry name" value="60S RIBOSOMAL PROTEIN L23A"/>
    <property type="match status" value="1"/>
</dbReference>
<dbReference type="Pfam" id="PF00276">
    <property type="entry name" value="Ribosomal_L23"/>
    <property type="match status" value="1"/>
</dbReference>
<dbReference type="SUPFAM" id="SSF54189">
    <property type="entry name" value="Ribosomal proteins S24e, L23 and L15e"/>
    <property type="match status" value="1"/>
</dbReference>
<dbReference type="PROSITE" id="PS00050">
    <property type="entry name" value="RIBOSOMAL_L23"/>
    <property type="match status" value="1"/>
</dbReference>